<comment type="similarity">
    <text evidence="1">Belongs to the herpesviridae BDLF2 family.</text>
</comment>
<evidence type="ECO:0000305" key="1"/>
<protein>
    <recommendedName>
        <fullName>Uncharacterized gene 27 protein</fullName>
    </recommendedName>
</protein>
<organismHost>
    <name type="scientific">Saimiri sciureus</name>
    <name type="common">Common squirrel monkey</name>
    <dbReference type="NCBI Taxonomy" id="9521"/>
</organismHost>
<keyword id="KW-1185">Reference proteome</keyword>
<organism>
    <name type="scientific">Saimiriine herpesvirus 2 (strain 11)</name>
    <name type="common">SaHV-2</name>
    <name type="synonym">Herpesvirus saimiri</name>
    <dbReference type="NCBI Taxonomy" id="10383"/>
    <lineage>
        <taxon>Viruses</taxon>
        <taxon>Duplodnaviria</taxon>
        <taxon>Heunggongvirae</taxon>
        <taxon>Peploviricota</taxon>
        <taxon>Herviviricetes</taxon>
        <taxon>Herpesvirales</taxon>
        <taxon>Orthoherpesviridae</taxon>
        <taxon>Gammaherpesvirinae</taxon>
        <taxon>Rhadinovirus</taxon>
        <taxon>Rhadinovirus saimiriinegamma2</taxon>
        <taxon>Saimiriine herpesvirus 2</taxon>
    </lineage>
</organism>
<dbReference type="EMBL" id="X64346">
    <property type="protein sequence ID" value="CAA45650.1"/>
    <property type="molecule type" value="Genomic_DNA"/>
</dbReference>
<dbReference type="RefSeq" id="NP_040229.1">
    <property type="nucleotide sequence ID" value="NC_001350.1"/>
</dbReference>
<dbReference type="SMR" id="Q00998"/>
<dbReference type="KEGG" id="vg:1682473"/>
<dbReference type="Proteomes" id="UP000000587">
    <property type="component" value="Segment"/>
</dbReference>
<sequence>MQEDIPNILYVSREEDGRIVEMIVTEKHKEKYVYYPYSNKSTFTIEDTKLFNIANFSLIIQWITYTLFYSQAVIIFILYCWALNPYRSPGNSVLGGLGQRVPRTVVHINPHNIFEGCDKSIICKLRLPMPIINTTHGKIYPNFTKTGGSSANYKLALERLVGLMNNQQCNVEIISQKKTVFSSQNVTFFENVKSDAILALLVLQKNCHPESVEIVKSKIKLENYGVNYRQHMPQYFTVCNASWADVINNTNYNFKTSDRPCNTNYLLRYPQHVPYIINVK</sequence>
<accession>Q00998</accession>
<reference key="1">
    <citation type="journal article" date="1992" name="J. Virol.">
        <title>Primary structure of the herpesvirus saimiri genome.</title>
        <authorList>
            <person name="Albrecht J.-C."/>
            <person name="Nicholas J."/>
            <person name="Biller D."/>
            <person name="Cameron K.R."/>
            <person name="Biesinger B."/>
            <person name="Newman C."/>
            <person name="Wittmann S."/>
            <person name="Craxton M.A."/>
            <person name="Coleman H."/>
            <person name="Fleckenstein B."/>
            <person name="Honess R.W."/>
        </authorList>
    </citation>
    <scope>NUCLEOTIDE SEQUENCE [LARGE SCALE GENOMIC DNA]</scope>
</reference>
<feature type="chain" id="PRO_0000116268" description="Uncharacterized gene 27 protein">
    <location>
        <begin position="1"/>
        <end position="280"/>
    </location>
</feature>
<name>VG27_SHV21</name>
<proteinExistence type="inferred from homology"/>
<gene>
    <name type="primary">27</name>
</gene>